<keyword id="KW-1185">Reference proteome</keyword>
<dbReference type="EMBL" id="CP000673">
    <property type="protein sequence ID" value="EDK33442.1"/>
    <property type="molecule type" value="Genomic_DNA"/>
</dbReference>
<dbReference type="RefSeq" id="WP_012101789.1">
    <property type="nucleotide sequence ID" value="NC_009706.1"/>
</dbReference>
<dbReference type="SMR" id="A5N811"/>
<dbReference type="STRING" id="431943.CKL_1400"/>
<dbReference type="KEGG" id="ckl:CKL_1400"/>
<dbReference type="eggNOG" id="COG2739">
    <property type="taxonomic scope" value="Bacteria"/>
</dbReference>
<dbReference type="HOGENOM" id="CLU_129218_0_1_9"/>
<dbReference type="Proteomes" id="UP000002411">
    <property type="component" value="Chromosome"/>
</dbReference>
<dbReference type="Gene3D" id="1.10.10.10">
    <property type="entry name" value="Winged helix-like DNA-binding domain superfamily/Winged helix DNA-binding domain"/>
    <property type="match status" value="1"/>
</dbReference>
<dbReference type="HAMAP" id="MF_00245">
    <property type="entry name" value="UPF0122"/>
    <property type="match status" value="1"/>
</dbReference>
<dbReference type="InterPro" id="IPR013324">
    <property type="entry name" value="RNA_pol_sigma_r3/r4-like"/>
</dbReference>
<dbReference type="InterPro" id="IPR007394">
    <property type="entry name" value="UPF0122"/>
</dbReference>
<dbReference type="InterPro" id="IPR054831">
    <property type="entry name" value="UPF0122_fam_protein"/>
</dbReference>
<dbReference type="InterPro" id="IPR036388">
    <property type="entry name" value="WH-like_DNA-bd_sf"/>
</dbReference>
<dbReference type="NCBIfam" id="NF001072">
    <property type="entry name" value="PRK00118.2-2"/>
    <property type="match status" value="1"/>
</dbReference>
<dbReference type="NCBIfam" id="NF045758">
    <property type="entry name" value="YlxM"/>
    <property type="match status" value="1"/>
</dbReference>
<dbReference type="PANTHER" id="PTHR40083">
    <property type="entry name" value="UPF0122 PROTEIN CBO2450/CLC_2298"/>
    <property type="match status" value="1"/>
</dbReference>
<dbReference type="PANTHER" id="PTHR40083:SF1">
    <property type="entry name" value="UPF0122 PROTEIN YLXM"/>
    <property type="match status" value="1"/>
</dbReference>
<dbReference type="Pfam" id="PF04297">
    <property type="entry name" value="UPF0122"/>
    <property type="match status" value="1"/>
</dbReference>
<dbReference type="SUPFAM" id="SSF88659">
    <property type="entry name" value="Sigma3 and sigma4 domains of RNA polymerase sigma factors"/>
    <property type="match status" value="1"/>
</dbReference>
<feature type="chain" id="PRO_1000078400" description="UPF0122 protein CKL_1400">
    <location>
        <begin position="1"/>
        <end position="111"/>
    </location>
</feature>
<evidence type="ECO:0000255" key="1">
    <source>
        <dbReference type="HAMAP-Rule" id="MF_00245"/>
    </source>
</evidence>
<gene>
    <name type="ordered locus">CKL_1400</name>
</gene>
<reference key="1">
    <citation type="journal article" date="2008" name="Proc. Natl. Acad. Sci. U.S.A.">
        <title>The genome of Clostridium kluyveri, a strict anaerobe with unique metabolic features.</title>
        <authorList>
            <person name="Seedorf H."/>
            <person name="Fricke W.F."/>
            <person name="Veith B."/>
            <person name="Brueggemann H."/>
            <person name="Liesegang H."/>
            <person name="Strittmatter A."/>
            <person name="Miethke M."/>
            <person name="Buckel W."/>
            <person name="Hinderberger J."/>
            <person name="Li F."/>
            <person name="Hagemeier C."/>
            <person name="Thauer R.K."/>
            <person name="Gottschalk G."/>
        </authorList>
    </citation>
    <scope>NUCLEOTIDE SEQUENCE [LARGE SCALE GENOMIC DNA]</scope>
    <source>
        <strain>ATCC 8527 / DSM 555 / NBRC 12016 / NCIMB 10680 / K1</strain>
    </source>
</reference>
<sequence length="111" mass="13195">MEERIRLSILLDIYGELLTEKQRNVLDLYYNQDLSLAEIAEHTSTSRQAVYDIIKRCHMLLVHYEDKLNLMEEKKNIEENKKGIIDFIDSLYSDKNAEVLDKIKNYIMNNI</sequence>
<organism>
    <name type="scientific">Clostridium kluyveri (strain ATCC 8527 / DSM 555 / NBRC 12016 / NCIMB 10680 / K1)</name>
    <dbReference type="NCBI Taxonomy" id="431943"/>
    <lineage>
        <taxon>Bacteria</taxon>
        <taxon>Bacillati</taxon>
        <taxon>Bacillota</taxon>
        <taxon>Clostridia</taxon>
        <taxon>Eubacteriales</taxon>
        <taxon>Clostridiaceae</taxon>
        <taxon>Clostridium</taxon>
    </lineage>
</organism>
<accession>A5N811</accession>
<proteinExistence type="inferred from homology"/>
<name>Y1400_CLOK5</name>
<protein>
    <recommendedName>
        <fullName evidence="1">UPF0122 protein CKL_1400</fullName>
    </recommendedName>
</protein>
<comment type="function">
    <text evidence="1">Might take part in the signal recognition particle (SRP) pathway. This is inferred from the conservation of its genetic proximity to ftsY/ffh. May be a regulatory protein.</text>
</comment>
<comment type="similarity">
    <text evidence="1">Belongs to the UPF0122 family.</text>
</comment>